<keyword id="KW-0963">Cytoplasm</keyword>
<protein>
    <recommendedName>
        <fullName>Antigenic heat-stable 120 kDa protein</fullName>
    </recommendedName>
    <alternativeName>
        <fullName>120 kDa antigen</fullName>
    </alternativeName>
    <alternativeName>
        <fullName>Protein PS 120</fullName>
        <shortName>PS120</shortName>
        <shortName>rps120</shortName>
    </alternativeName>
</protein>
<feature type="chain" id="PRO_0000097612" description="Antigenic heat-stable 120 kDa protein">
    <location>
        <begin position="1"/>
        <end position="1018"/>
    </location>
</feature>
<feature type="region of interest" description="Disordered" evidence="1">
    <location>
        <begin position="1"/>
        <end position="82"/>
    </location>
</feature>
<feature type="region of interest" description="Disordered" evidence="1">
    <location>
        <begin position="355"/>
        <end position="402"/>
    </location>
</feature>
<feature type="region of interest" description="Disordered" evidence="1">
    <location>
        <begin position="995"/>
        <end position="1018"/>
    </location>
</feature>
<feature type="compositionally biased region" description="Polar residues" evidence="1">
    <location>
        <begin position="1"/>
        <end position="11"/>
    </location>
</feature>
<feature type="compositionally biased region" description="Basic and acidic residues" evidence="1">
    <location>
        <begin position="19"/>
        <end position="34"/>
    </location>
</feature>
<feature type="compositionally biased region" description="Low complexity" evidence="1">
    <location>
        <begin position="53"/>
        <end position="68"/>
    </location>
</feature>
<feature type="compositionally biased region" description="Polar residues" evidence="1">
    <location>
        <begin position="69"/>
        <end position="80"/>
    </location>
</feature>
<feature type="compositionally biased region" description="Polar residues" evidence="1">
    <location>
        <begin position="355"/>
        <end position="380"/>
    </location>
</feature>
<feature type="compositionally biased region" description="Polar residues" evidence="1">
    <location>
        <begin position="387"/>
        <end position="402"/>
    </location>
</feature>
<feature type="compositionally biased region" description="Polar residues" evidence="1">
    <location>
        <begin position="996"/>
        <end position="1007"/>
    </location>
</feature>
<feature type="compositionally biased region" description="Basic and acidic residues" evidence="1">
    <location>
        <begin position="1009"/>
        <end position="1018"/>
    </location>
</feature>
<feature type="sequence conflict" description="In Ref. 3; AAK30686." evidence="2" ref="3">
    <original>N</original>
    <variation>D</variation>
    <location>
        <position position="8"/>
    </location>
</feature>
<feature type="sequence conflict" description="In Ref. 3; AAK30686." evidence="2" ref="3">
    <original>K</original>
    <variation>E</variation>
    <location>
        <position position="449"/>
    </location>
</feature>
<feature type="sequence conflict" description="In Ref. 3; AAK30686." evidence="2" ref="3">
    <original>S</original>
    <variation>G</variation>
    <location>
        <position position="693"/>
    </location>
</feature>
<dbReference type="EMBL" id="AB003696">
    <property type="protein sequence ID" value="BAA20142.1"/>
    <property type="molecule type" value="Genomic_DNA"/>
</dbReference>
<dbReference type="EMBL" id="AP011533">
    <property type="protein sequence ID" value="BAK96723.1"/>
    <property type="status" value="ALT_INIT"/>
    <property type="molecule type" value="Genomic_DNA"/>
</dbReference>
<dbReference type="EMBL" id="AF155055">
    <property type="protein sequence ID" value="AAK30686.1"/>
    <property type="molecule type" value="Genomic_DNA"/>
</dbReference>
<dbReference type="PIR" id="T30853">
    <property type="entry name" value="T30853"/>
</dbReference>
<dbReference type="RefSeq" id="WP_081497972.1">
    <property type="nucleotide sequence ID" value="NC_016050.1"/>
</dbReference>
<dbReference type="SMR" id="Q9AJ79"/>
<dbReference type="GeneID" id="34514335"/>
<dbReference type="KEGG" id="rja:RJP_0510"/>
<dbReference type="HOGENOM" id="CLU_009206_0_0_5"/>
<dbReference type="Proteomes" id="UP000002659">
    <property type="component" value="Chromosome"/>
</dbReference>
<dbReference type="GO" id="GO:0005737">
    <property type="term" value="C:cytoplasm"/>
    <property type="evidence" value="ECO:0007669"/>
    <property type="project" value="UniProtKB-SubCell"/>
</dbReference>
<dbReference type="InterPro" id="IPR020954">
    <property type="entry name" value="Rickettsia_antigen_120kDa"/>
</dbReference>
<dbReference type="NCBIfam" id="NF038365">
    <property type="entry name" value="Sca4_fam"/>
    <property type="match status" value="1"/>
</dbReference>
<dbReference type="Pfam" id="PF12574">
    <property type="entry name" value="120_Rick_ant"/>
    <property type="match status" value="1"/>
</dbReference>
<accession>Q9AJ79</accession>
<accession>G4KN65</accession>
<accession>O06654</accession>
<comment type="subcellular location">
    <subcellularLocation>
        <location evidence="2">Cytoplasm</location>
    </subcellularLocation>
</comment>
<comment type="sequence caution" evidence="2">
    <conflict type="erroneous initiation">
        <sequence resource="EMBL-CDS" id="BAK96723"/>
    </conflict>
    <text>Extended N-terminus.</text>
</comment>
<organism>
    <name type="scientific">Rickettsia japonica (strain ATCC VR-1363 / YH)</name>
    <dbReference type="NCBI Taxonomy" id="652620"/>
    <lineage>
        <taxon>Bacteria</taxon>
        <taxon>Pseudomonadati</taxon>
        <taxon>Pseudomonadota</taxon>
        <taxon>Alphaproteobacteria</taxon>
        <taxon>Rickettsiales</taxon>
        <taxon>Rickettsiaceae</taxon>
        <taxon>Rickettsieae</taxon>
        <taxon>Rickettsia</taxon>
        <taxon>spotted fever group</taxon>
    </lineage>
</organism>
<gene>
    <name type="primary">sca4</name>
    <name type="synonym">D</name>
    <name type="ordered locus">RJP_0510</name>
</gene>
<reference key="1">
    <citation type="journal article" date="1999" name="Microbiol. Immunol.">
        <title>Sequence analysis of the gene encoding a spotted fever group-specific intracytoplasmic protein PS120 of Rickettsia japonica.</title>
        <authorList>
            <person name="Uchiyama T."/>
        </authorList>
    </citation>
    <scope>NUCLEOTIDE SEQUENCE [GENOMIC DNA]</scope>
    <source>
        <strain>ATCC VR-1363 / YH</strain>
    </source>
</reference>
<reference key="2">
    <citation type="journal article" date="2013" name="PLoS ONE">
        <title>Complete genomic DNA sequence of the East Asian spotted fever disease agent Rickettsia japonica.</title>
        <authorList>
            <person name="Matsutani M."/>
            <person name="Ogawa M."/>
            <person name="Takaoka N."/>
            <person name="Hanaoka N."/>
            <person name="Toh H."/>
            <person name="Yamashita A."/>
            <person name="Oshima K."/>
            <person name="Hirakawa H."/>
            <person name="Kuhara S."/>
            <person name="Suzuki H."/>
            <person name="Hattori M."/>
            <person name="Kishimoto T."/>
            <person name="Ando S."/>
            <person name="Azuma Y."/>
            <person name="Shirai M."/>
        </authorList>
    </citation>
    <scope>NUCLEOTIDE SEQUENCE [LARGE SCALE GENOMIC DNA]</scope>
    <source>
        <strain>ATCC VR-1363 / YH</strain>
    </source>
</reference>
<reference key="3">
    <citation type="journal article" date="2001" name="Int. J. Syst. Evol. Microbiol.">
        <title>Phylogeny of Rickettsia spp. inferred by comparing sequences of 'gene D', which encodes an intracytoplasmic protein.</title>
        <authorList>
            <person name="Sekeyova Z."/>
            <person name="Roux V."/>
            <person name="Raoult D."/>
        </authorList>
    </citation>
    <scope>NUCLEOTIDE SEQUENCE [GENOMIC DNA] OF 8-1012</scope>
    <source>
        <strain>YM</strain>
    </source>
</reference>
<evidence type="ECO:0000256" key="1">
    <source>
        <dbReference type="SAM" id="MobiDB-lite"/>
    </source>
</evidence>
<evidence type="ECO:0000305" key="2"/>
<proteinExistence type="predicted"/>
<name>SCA4_RICJY</name>
<sequence>MSKDGNLNTSEFDPLANKEYTEEQKQTLEQEQKEFLSQTTTPELEADDGFIVTSASSAQSTPSTSALSGNISPDSQTSDPITKAVRETIIQPQKDNLIEQILKDLAALTDHDLAEQKRKEIEEEKDKDKTLSTFFGNPANREFIDKALENPELKKKLESIEIAGYKNVHNTFSAASGYPGGFKPVQWENHVSASDLRATVVKNDAGDELCTLNETTVKTKPFTLAKQDGTQVQISSYREIDFPIKLDKADGSMHLSMVALKADGTKPSKDKAVYFTAHYEEGPNGKPQLKEISSPKPLKFAGTGDDAIAYIEHGGEIYTLAVTRGKYKEMMKEVELNQGQSVDLSQAEDIIIGQGQSKEQPLITPQQTTSSSVEPPQYKQQVPPITPTNQPLQPETSQMPQSQQVNPNLLNAATALSGSMQDLLNYVNAGLTKEIDLIKEAATAILNDKKSDIAEKQANIIALAENTVNNKNLTPDAKVAGVNAVLETIKNDQNTPDLEKSKMLEATVAIALNSENLEPKQKQQILEKAVDVGLSLKDDASRAAAIDGITDAVIKSNLSTEDKGTMFIAVGDKVNVSELSNAEKQKLLGSVLKKGVEAQVLSPAQQQLMQQNLDKITAEQTKKDTIKKVNDILFDPLSNTELKTTNIQAIISNVLDGPATAEVKGEIIQEITNTVAGSSLEAHDKAAIIKGISETIATHSDTSLSLPNKALIMASAEKGIAESQANLPDRELMTKGLVDGIYEGKGGPEITKAVSSGIDNSNINDSEKEALKKAKDAASEAALDRETQNLTEGLKGQNIEEHKPHDDIYNKVREVINAVNPVIEALEKSKEPVVSAEERIVQETSSILNNISKLAVEKVNNFRAMLSPNGNLKTLEEKKEESIKKVDELVKAFGTKSSTEEQQSFIKANLIDDKTLSKEIRLQTIDKLLQEQKRAEAIENPSVKTEDVRVVSGKSKLKPISKDKPDIEKAKMVVGRDRVNIKGNIKIMRALMNARDSIQSENLNKSTPIKRESSPPQR</sequence>